<organism>
    <name type="scientific">Haemophilus influenzae (strain PittGG)</name>
    <dbReference type="NCBI Taxonomy" id="374931"/>
    <lineage>
        <taxon>Bacteria</taxon>
        <taxon>Pseudomonadati</taxon>
        <taxon>Pseudomonadota</taxon>
        <taxon>Gammaproteobacteria</taxon>
        <taxon>Pasteurellales</taxon>
        <taxon>Pasteurellaceae</taxon>
        <taxon>Haemophilus</taxon>
    </lineage>
</organism>
<sequence>MLCAIYKSKKKLGSYLYVANREDFSSVPSVLLEHFGKPELVMMFNLLGRKALYNVDCNEVLETIKRQGFYLQIAKQDDGLFNSLSEIK</sequence>
<reference key="1">
    <citation type="journal article" date="2007" name="Genome Biol.">
        <title>Characterization and modeling of the Haemophilus influenzae core and supragenomes based on the complete genomic sequences of Rd and 12 clinical nontypeable strains.</title>
        <authorList>
            <person name="Hogg J.S."/>
            <person name="Hu F.Z."/>
            <person name="Janto B."/>
            <person name="Boissy R."/>
            <person name="Hayes J."/>
            <person name="Keefe R."/>
            <person name="Post J.C."/>
            <person name="Ehrlich G.D."/>
        </authorList>
    </citation>
    <scope>NUCLEOTIDE SEQUENCE [LARGE SCALE GENOMIC DNA]</scope>
    <source>
        <strain>PittGG</strain>
    </source>
</reference>
<evidence type="ECO:0000255" key="1">
    <source>
        <dbReference type="HAMAP-Rule" id="MF_01866"/>
    </source>
</evidence>
<feature type="chain" id="PRO_0000375310" description="YcgL domain-containing protein CGSHiGG_01115">
    <location>
        <begin position="1"/>
        <end position="88"/>
    </location>
</feature>
<feature type="domain" description="YcgL" evidence="1">
    <location>
        <begin position="1"/>
        <end position="85"/>
    </location>
</feature>
<gene>
    <name type="ordered locus">CGSHiGG_01115</name>
</gene>
<dbReference type="EMBL" id="CP000672">
    <property type="protein sequence ID" value="ABQ99318.1"/>
    <property type="molecule type" value="Genomic_DNA"/>
</dbReference>
<dbReference type="SMR" id="A5UEW3"/>
<dbReference type="KEGG" id="hiq:CGSHiGG_01115"/>
<dbReference type="HOGENOM" id="CLU_155118_1_0_6"/>
<dbReference type="Proteomes" id="UP000001990">
    <property type="component" value="Chromosome"/>
</dbReference>
<dbReference type="Gene3D" id="3.10.510.20">
    <property type="entry name" value="YcgL domain"/>
    <property type="match status" value="1"/>
</dbReference>
<dbReference type="HAMAP" id="MF_01866">
    <property type="entry name" value="UPF0745"/>
    <property type="match status" value="1"/>
</dbReference>
<dbReference type="InterPro" id="IPR038068">
    <property type="entry name" value="YcgL-like_sf"/>
</dbReference>
<dbReference type="InterPro" id="IPR027354">
    <property type="entry name" value="YcgL_dom"/>
</dbReference>
<dbReference type="PANTHER" id="PTHR38109">
    <property type="entry name" value="PROTEIN YCGL"/>
    <property type="match status" value="1"/>
</dbReference>
<dbReference type="PANTHER" id="PTHR38109:SF1">
    <property type="entry name" value="PROTEIN YCGL"/>
    <property type="match status" value="1"/>
</dbReference>
<dbReference type="Pfam" id="PF05166">
    <property type="entry name" value="YcgL"/>
    <property type="match status" value="1"/>
</dbReference>
<dbReference type="SUPFAM" id="SSF160191">
    <property type="entry name" value="YcgL-like"/>
    <property type="match status" value="1"/>
</dbReference>
<dbReference type="PROSITE" id="PS51648">
    <property type="entry name" value="YCGL"/>
    <property type="match status" value="1"/>
</dbReference>
<accession>A5UEW3</accession>
<protein>
    <recommendedName>
        <fullName evidence="1">YcgL domain-containing protein CGSHiGG_01115</fullName>
    </recommendedName>
</protein>
<name>Y1115_HAEIG</name>
<proteinExistence type="inferred from homology"/>